<proteinExistence type="inferred from homology"/>
<feature type="chain" id="PRO_0000301423" description="UDP-N-acetylmuramoylalanine--D-glutamate ligase">
    <location>
        <begin position="1"/>
        <end position="466"/>
    </location>
</feature>
<feature type="binding site" evidence="1">
    <location>
        <begin position="124"/>
        <end position="130"/>
    </location>
    <ligand>
        <name>ATP</name>
        <dbReference type="ChEBI" id="CHEBI:30616"/>
    </ligand>
</feature>
<dbReference type="EC" id="6.3.2.9" evidence="1"/>
<dbReference type="EMBL" id="CP000568">
    <property type="protein sequence ID" value="ABN52273.1"/>
    <property type="molecule type" value="Genomic_DNA"/>
</dbReference>
<dbReference type="RefSeq" id="WP_011837954.1">
    <property type="nucleotide sequence ID" value="NC_009012.1"/>
</dbReference>
<dbReference type="SMR" id="A3DE94"/>
<dbReference type="STRING" id="203119.Cthe_1041"/>
<dbReference type="GeneID" id="35803118"/>
<dbReference type="KEGG" id="cth:Cthe_1041"/>
<dbReference type="eggNOG" id="COG0771">
    <property type="taxonomic scope" value="Bacteria"/>
</dbReference>
<dbReference type="HOGENOM" id="CLU_032540_0_1_9"/>
<dbReference type="OrthoDB" id="9809796at2"/>
<dbReference type="UniPathway" id="UPA00219"/>
<dbReference type="Proteomes" id="UP000002145">
    <property type="component" value="Chromosome"/>
</dbReference>
<dbReference type="GO" id="GO:0005737">
    <property type="term" value="C:cytoplasm"/>
    <property type="evidence" value="ECO:0007669"/>
    <property type="project" value="UniProtKB-SubCell"/>
</dbReference>
<dbReference type="GO" id="GO:0005524">
    <property type="term" value="F:ATP binding"/>
    <property type="evidence" value="ECO:0007669"/>
    <property type="project" value="UniProtKB-UniRule"/>
</dbReference>
<dbReference type="GO" id="GO:0008764">
    <property type="term" value="F:UDP-N-acetylmuramoylalanine-D-glutamate ligase activity"/>
    <property type="evidence" value="ECO:0007669"/>
    <property type="project" value="UniProtKB-UniRule"/>
</dbReference>
<dbReference type="GO" id="GO:0051301">
    <property type="term" value="P:cell division"/>
    <property type="evidence" value="ECO:0007669"/>
    <property type="project" value="UniProtKB-KW"/>
</dbReference>
<dbReference type="GO" id="GO:0071555">
    <property type="term" value="P:cell wall organization"/>
    <property type="evidence" value="ECO:0007669"/>
    <property type="project" value="UniProtKB-KW"/>
</dbReference>
<dbReference type="GO" id="GO:0009252">
    <property type="term" value="P:peptidoglycan biosynthetic process"/>
    <property type="evidence" value="ECO:0007669"/>
    <property type="project" value="UniProtKB-UniRule"/>
</dbReference>
<dbReference type="GO" id="GO:0008360">
    <property type="term" value="P:regulation of cell shape"/>
    <property type="evidence" value="ECO:0007669"/>
    <property type="project" value="UniProtKB-KW"/>
</dbReference>
<dbReference type="Gene3D" id="3.90.190.20">
    <property type="entry name" value="Mur ligase, C-terminal domain"/>
    <property type="match status" value="1"/>
</dbReference>
<dbReference type="Gene3D" id="3.40.1190.10">
    <property type="entry name" value="Mur-like, catalytic domain"/>
    <property type="match status" value="1"/>
</dbReference>
<dbReference type="Gene3D" id="3.40.50.720">
    <property type="entry name" value="NAD(P)-binding Rossmann-like Domain"/>
    <property type="match status" value="1"/>
</dbReference>
<dbReference type="HAMAP" id="MF_00639">
    <property type="entry name" value="MurD"/>
    <property type="match status" value="1"/>
</dbReference>
<dbReference type="InterPro" id="IPR036565">
    <property type="entry name" value="Mur-like_cat_sf"/>
</dbReference>
<dbReference type="InterPro" id="IPR004101">
    <property type="entry name" value="Mur_ligase_C"/>
</dbReference>
<dbReference type="InterPro" id="IPR036615">
    <property type="entry name" value="Mur_ligase_C_dom_sf"/>
</dbReference>
<dbReference type="InterPro" id="IPR013221">
    <property type="entry name" value="Mur_ligase_cen"/>
</dbReference>
<dbReference type="InterPro" id="IPR005762">
    <property type="entry name" value="MurD"/>
</dbReference>
<dbReference type="NCBIfam" id="TIGR01087">
    <property type="entry name" value="murD"/>
    <property type="match status" value="1"/>
</dbReference>
<dbReference type="PANTHER" id="PTHR43692">
    <property type="entry name" value="UDP-N-ACETYLMURAMOYLALANINE--D-GLUTAMATE LIGASE"/>
    <property type="match status" value="1"/>
</dbReference>
<dbReference type="PANTHER" id="PTHR43692:SF1">
    <property type="entry name" value="UDP-N-ACETYLMURAMOYLALANINE--D-GLUTAMATE LIGASE"/>
    <property type="match status" value="1"/>
</dbReference>
<dbReference type="Pfam" id="PF02875">
    <property type="entry name" value="Mur_ligase_C"/>
    <property type="match status" value="1"/>
</dbReference>
<dbReference type="Pfam" id="PF08245">
    <property type="entry name" value="Mur_ligase_M"/>
    <property type="match status" value="1"/>
</dbReference>
<dbReference type="Pfam" id="PF21799">
    <property type="entry name" value="MurD-like_N"/>
    <property type="match status" value="1"/>
</dbReference>
<dbReference type="SUPFAM" id="SSF51984">
    <property type="entry name" value="MurCD N-terminal domain"/>
    <property type="match status" value="1"/>
</dbReference>
<dbReference type="SUPFAM" id="SSF53623">
    <property type="entry name" value="MurD-like peptide ligases, catalytic domain"/>
    <property type="match status" value="1"/>
</dbReference>
<dbReference type="SUPFAM" id="SSF53244">
    <property type="entry name" value="MurD-like peptide ligases, peptide-binding domain"/>
    <property type="match status" value="1"/>
</dbReference>
<name>MURD_ACET2</name>
<organism>
    <name type="scientific">Acetivibrio thermocellus (strain ATCC 27405 / DSM 1237 / JCM 9322 / NBRC 103400 / NCIMB 10682 / NRRL B-4536 / VPI 7372)</name>
    <name type="common">Clostridium thermocellum</name>
    <dbReference type="NCBI Taxonomy" id="203119"/>
    <lineage>
        <taxon>Bacteria</taxon>
        <taxon>Bacillati</taxon>
        <taxon>Bacillota</taxon>
        <taxon>Clostridia</taxon>
        <taxon>Eubacteriales</taxon>
        <taxon>Oscillospiraceae</taxon>
        <taxon>Acetivibrio</taxon>
    </lineage>
</organism>
<gene>
    <name evidence="1" type="primary">murD</name>
    <name type="ordered locus">Cthe_1041</name>
</gene>
<protein>
    <recommendedName>
        <fullName evidence="1">UDP-N-acetylmuramoylalanine--D-glutamate ligase</fullName>
        <ecNumber evidence="1">6.3.2.9</ecNumber>
    </recommendedName>
    <alternativeName>
        <fullName evidence="1">D-glutamic acid-adding enzyme</fullName>
    </alternativeName>
    <alternativeName>
        <fullName evidence="1">UDP-N-acetylmuramoyl-L-alanyl-D-glutamate synthetase</fullName>
    </alternativeName>
</protein>
<sequence length="466" mass="51785">MNTKLNDFKKKIKNKKVAVLGIGISHTPLISYLYRLGADITAFDKADEVKLKSTLEQFKGMDIKYSLGEGYLDNLKGFDILFRTPGMRYDIPEILAAKEEGTEVTSEMEVFFELCPAEIFAVTGSDGKTTTTTLIYNMLKEQGYKCWLGGNIGIPLLSKIEEIKDTDKVVLELSSFQLHTMTKSPNVAVVTNVSPNHLDVHKSMEEYVSAKKNIFRYQSAEDRLVLNFDNDITREFAGEAKGDVVYFSRKTVLEKGAMLKDDMLVFRDGETETEIAKASDIVIPGVHNVENFLAATAAVIDCVDRDVIRKVATTFTGVEHRIELVREINGVKFYNDSIASSPTRTIAGLNSFKDKVILIAGGYDKKIPYDALGPVIAEKVKCLVLIGQTAPKIEKVLRDETERSGKGSDIPIKKCTSLEEAVKVAYRFASVGDVVILSPASASFDMFKNFEERGNRFKEIVNSIEA</sequence>
<evidence type="ECO:0000255" key="1">
    <source>
        <dbReference type="HAMAP-Rule" id="MF_00639"/>
    </source>
</evidence>
<keyword id="KW-0067">ATP-binding</keyword>
<keyword id="KW-0131">Cell cycle</keyword>
<keyword id="KW-0132">Cell division</keyword>
<keyword id="KW-0133">Cell shape</keyword>
<keyword id="KW-0961">Cell wall biogenesis/degradation</keyword>
<keyword id="KW-0963">Cytoplasm</keyword>
<keyword id="KW-0436">Ligase</keyword>
<keyword id="KW-0547">Nucleotide-binding</keyword>
<keyword id="KW-0573">Peptidoglycan synthesis</keyword>
<keyword id="KW-1185">Reference proteome</keyword>
<accession>A3DE94</accession>
<reference key="1">
    <citation type="submission" date="2007-02" db="EMBL/GenBank/DDBJ databases">
        <title>Complete sequence of Clostridium thermocellum ATCC 27405.</title>
        <authorList>
            <consortium name="US DOE Joint Genome Institute"/>
            <person name="Copeland A."/>
            <person name="Lucas S."/>
            <person name="Lapidus A."/>
            <person name="Barry K."/>
            <person name="Detter J.C."/>
            <person name="Glavina del Rio T."/>
            <person name="Hammon N."/>
            <person name="Israni S."/>
            <person name="Dalin E."/>
            <person name="Tice H."/>
            <person name="Pitluck S."/>
            <person name="Chertkov O."/>
            <person name="Brettin T."/>
            <person name="Bruce D."/>
            <person name="Han C."/>
            <person name="Tapia R."/>
            <person name="Gilna P."/>
            <person name="Schmutz J."/>
            <person name="Larimer F."/>
            <person name="Land M."/>
            <person name="Hauser L."/>
            <person name="Kyrpides N."/>
            <person name="Mikhailova N."/>
            <person name="Wu J.H.D."/>
            <person name="Newcomb M."/>
            <person name="Richardson P."/>
        </authorList>
    </citation>
    <scope>NUCLEOTIDE SEQUENCE [LARGE SCALE GENOMIC DNA]</scope>
    <source>
        <strain>ATCC 27405 / DSM 1237 / JCM 9322 / NBRC 103400 / NCIMB 10682 / NRRL B-4536 / VPI 7372</strain>
    </source>
</reference>
<comment type="function">
    <text evidence="1">Cell wall formation. Catalyzes the addition of glutamate to the nucleotide precursor UDP-N-acetylmuramoyl-L-alanine (UMA).</text>
</comment>
<comment type="catalytic activity">
    <reaction evidence="1">
        <text>UDP-N-acetyl-alpha-D-muramoyl-L-alanine + D-glutamate + ATP = UDP-N-acetyl-alpha-D-muramoyl-L-alanyl-D-glutamate + ADP + phosphate + H(+)</text>
        <dbReference type="Rhea" id="RHEA:16429"/>
        <dbReference type="ChEBI" id="CHEBI:15378"/>
        <dbReference type="ChEBI" id="CHEBI:29986"/>
        <dbReference type="ChEBI" id="CHEBI:30616"/>
        <dbReference type="ChEBI" id="CHEBI:43474"/>
        <dbReference type="ChEBI" id="CHEBI:83898"/>
        <dbReference type="ChEBI" id="CHEBI:83900"/>
        <dbReference type="ChEBI" id="CHEBI:456216"/>
        <dbReference type="EC" id="6.3.2.9"/>
    </reaction>
</comment>
<comment type="pathway">
    <text evidence="1">Cell wall biogenesis; peptidoglycan biosynthesis.</text>
</comment>
<comment type="subcellular location">
    <subcellularLocation>
        <location evidence="1">Cytoplasm</location>
    </subcellularLocation>
</comment>
<comment type="similarity">
    <text evidence="1">Belongs to the MurCDEF family.</text>
</comment>